<comment type="function">
    <text evidence="1">Part of the ABC transporter complex PstSACB involved in phosphate import. Responsible for energy coupling to the transport system.</text>
</comment>
<comment type="catalytic activity">
    <reaction evidence="1">
        <text>phosphate(out) + ATP + H2O = ADP + 2 phosphate(in) + H(+)</text>
        <dbReference type="Rhea" id="RHEA:24440"/>
        <dbReference type="ChEBI" id="CHEBI:15377"/>
        <dbReference type="ChEBI" id="CHEBI:15378"/>
        <dbReference type="ChEBI" id="CHEBI:30616"/>
        <dbReference type="ChEBI" id="CHEBI:43474"/>
        <dbReference type="ChEBI" id="CHEBI:456216"/>
        <dbReference type="EC" id="7.3.2.1"/>
    </reaction>
</comment>
<comment type="subunit">
    <text evidence="1">The complex is composed of two ATP-binding proteins (PstB), two transmembrane proteins (PstC and PstA) and a solute-binding protein (PstS).</text>
</comment>
<comment type="subcellular location">
    <subcellularLocation>
        <location evidence="1">Cell membrane</location>
        <topology evidence="1">Peripheral membrane protein</topology>
    </subcellularLocation>
</comment>
<comment type="similarity">
    <text evidence="1">Belongs to the ABC transporter superfamily. Phosphate importer (TC 3.A.1.7) family.</text>
</comment>
<protein>
    <recommendedName>
        <fullName evidence="1">Phosphate import ATP-binding protein PstB 1</fullName>
        <ecNumber evidence="1">7.3.2.1</ecNumber>
    </recommendedName>
    <alternativeName>
        <fullName evidence="1">ABC phosphate transporter 1</fullName>
    </alternativeName>
    <alternativeName>
        <fullName evidence="1">Phosphate-transporting ATPase 1</fullName>
    </alternativeName>
</protein>
<gene>
    <name evidence="1" type="primary">pstB1</name>
    <name type="ordered locus">LCA_0505</name>
</gene>
<organism>
    <name type="scientific">Latilactobacillus sakei subsp. sakei (strain 23K)</name>
    <name type="common">Lactobacillus sakei subsp. sakei</name>
    <dbReference type="NCBI Taxonomy" id="314315"/>
    <lineage>
        <taxon>Bacteria</taxon>
        <taxon>Bacillati</taxon>
        <taxon>Bacillota</taxon>
        <taxon>Bacilli</taxon>
        <taxon>Lactobacillales</taxon>
        <taxon>Lactobacillaceae</taxon>
        <taxon>Latilactobacillus</taxon>
    </lineage>
</organism>
<feature type="chain" id="PRO_0000272468" description="Phosphate import ATP-binding protein PstB 1">
    <location>
        <begin position="1"/>
        <end position="269"/>
    </location>
</feature>
<feature type="domain" description="ABC transporter" evidence="1">
    <location>
        <begin position="23"/>
        <end position="264"/>
    </location>
</feature>
<feature type="binding site" evidence="1">
    <location>
        <begin position="55"/>
        <end position="62"/>
    </location>
    <ligand>
        <name>ATP</name>
        <dbReference type="ChEBI" id="CHEBI:30616"/>
    </ligand>
</feature>
<keyword id="KW-0067">ATP-binding</keyword>
<keyword id="KW-1003">Cell membrane</keyword>
<keyword id="KW-0472">Membrane</keyword>
<keyword id="KW-0547">Nucleotide-binding</keyword>
<keyword id="KW-0592">Phosphate transport</keyword>
<keyword id="KW-1185">Reference proteome</keyword>
<keyword id="KW-1278">Translocase</keyword>
<keyword id="KW-0813">Transport</keyword>
<proteinExistence type="inferred from homology"/>
<reference key="1">
    <citation type="journal article" date="2005" name="Nat. Biotechnol.">
        <title>The complete genome sequence of the meat-borne lactic acid bacterium Lactobacillus sakei 23K.</title>
        <authorList>
            <person name="Chaillou S."/>
            <person name="Champomier-Verges M.-C."/>
            <person name="Cornet M."/>
            <person name="Crutz-Le Coq A.-M."/>
            <person name="Dudez A.-M."/>
            <person name="Martin V."/>
            <person name="Beaufils S."/>
            <person name="Darbon-Rongere E."/>
            <person name="Bossy R."/>
            <person name="Loux V."/>
            <person name="Zagorec M."/>
        </authorList>
    </citation>
    <scope>NUCLEOTIDE SEQUENCE [LARGE SCALE GENOMIC DNA]</scope>
    <source>
        <strain>23K</strain>
    </source>
</reference>
<accession>Q38YC2</accession>
<evidence type="ECO:0000255" key="1">
    <source>
        <dbReference type="HAMAP-Rule" id="MF_01702"/>
    </source>
</evidence>
<name>PSTB1_LATSS</name>
<sequence>MADYDLTKTHIKKLAEPKHEIALSTEDLNVYYGDKRAMHDASLQFERYRITALIGASGSGKSTYLRSLNRMNDNIANTRVTGKIMYRDVDINSDEVDVYKMREHIGMVFQRPNPFAKSIYDNITFALKQHGQKDKKYLDEIVETTLKQAALWDQVKDSLNKSALALSGGQQQRLCIARAIAMKPDILLMDEPASALDPISTNTVEETLIRLKEQYTIVIVTHNMQQAARISDYTAFFHSGHALEFDETRKMFTRPKIKAAEDYVSGHFG</sequence>
<dbReference type="EC" id="7.3.2.1" evidence="1"/>
<dbReference type="EMBL" id="CR936503">
    <property type="protein sequence ID" value="CAI54805.1"/>
    <property type="molecule type" value="Genomic_DNA"/>
</dbReference>
<dbReference type="SMR" id="Q38YC2"/>
<dbReference type="STRING" id="314315.LCA_0505"/>
<dbReference type="KEGG" id="lsa:LCA_0505"/>
<dbReference type="eggNOG" id="COG1117">
    <property type="taxonomic scope" value="Bacteria"/>
</dbReference>
<dbReference type="HOGENOM" id="CLU_000604_1_22_9"/>
<dbReference type="OrthoDB" id="9802185at2"/>
<dbReference type="Proteomes" id="UP000002707">
    <property type="component" value="Chromosome"/>
</dbReference>
<dbReference type="GO" id="GO:0005886">
    <property type="term" value="C:plasma membrane"/>
    <property type="evidence" value="ECO:0007669"/>
    <property type="project" value="UniProtKB-SubCell"/>
</dbReference>
<dbReference type="GO" id="GO:0005524">
    <property type="term" value="F:ATP binding"/>
    <property type="evidence" value="ECO:0007669"/>
    <property type="project" value="UniProtKB-KW"/>
</dbReference>
<dbReference type="GO" id="GO:0016887">
    <property type="term" value="F:ATP hydrolysis activity"/>
    <property type="evidence" value="ECO:0007669"/>
    <property type="project" value="InterPro"/>
</dbReference>
<dbReference type="GO" id="GO:0015415">
    <property type="term" value="F:ATPase-coupled phosphate ion transmembrane transporter activity"/>
    <property type="evidence" value="ECO:0007669"/>
    <property type="project" value="UniProtKB-EC"/>
</dbReference>
<dbReference type="GO" id="GO:0035435">
    <property type="term" value="P:phosphate ion transmembrane transport"/>
    <property type="evidence" value="ECO:0007669"/>
    <property type="project" value="InterPro"/>
</dbReference>
<dbReference type="CDD" id="cd03260">
    <property type="entry name" value="ABC_PstB_phosphate_transporter"/>
    <property type="match status" value="1"/>
</dbReference>
<dbReference type="Gene3D" id="3.40.50.300">
    <property type="entry name" value="P-loop containing nucleotide triphosphate hydrolases"/>
    <property type="match status" value="1"/>
</dbReference>
<dbReference type="InterPro" id="IPR003593">
    <property type="entry name" value="AAA+_ATPase"/>
</dbReference>
<dbReference type="InterPro" id="IPR003439">
    <property type="entry name" value="ABC_transporter-like_ATP-bd"/>
</dbReference>
<dbReference type="InterPro" id="IPR017871">
    <property type="entry name" value="ABC_transporter-like_CS"/>
</dbReference>
<dbReference type="InterPro" id="IPR027417">
    <property type="entry name" value="P-loop_NTPase"/>
</dbReference>
<dbReference type="InterPro" id="IPR005670">
    <property type="entry name" value="PstB-like"/>
</dbReference>
<dbReference type="NCBIfam" id="TIGR00972">
    <property type="entry name" value="3a0107s01c2"/>
    <property type="match status" value="1"/>
</dbReference>
<dbReference type="PANTHER" id="PTHR43423">
    <property type="entry name" value="ABC TRANSPORTER I FAMILY MEMBER 17"/>
    <property type="match status" value="1"/>
</dbReference>
<dbReference type="PANTHER" id="PTHR43423:SF10">
    <property type="entry name" value="PHOSPHATE IMPORT ATP-BINDING PROTEIN PSTB 2"/>
    <property type="match status" value="1"/>
</dbReference>
<dbReference type="Pfam" id="PF00005">
    <property type="entry name" value="ABC_tran"/>
    <property type="match status" value="1"/>
</dbReference>
<dbReference type="SMART" id="SM00382">
    <property type="entry name" value="AAA"/>
    <property type="match status" value="1"/>
</dbReference>
<dbReference type="SUPFAM" id="SSF52540">
    <property type="entry name" value="P-loop containing nucleoside triphosphate hydrolases"/>
    <property type="match status" value="1"/>
</dbReference>
<dbReference type="PROSITE" id="PS00211">
    <property type="entry name" value="ABC_TRANSPORTER_1"/>
    <property type="match status" value="1"/>
</dbReference>
<dbReference type="PROSITE" id="PS50893">
    <property type="entry name" value="ABC_TRANSPORTER_2"/>
    <property type="match status" value="1"/>
</dbReference>
<dbReference type="PROSITE" id="PS51238">
    <property type="entry name" value="PSTB"/>
    <property type="match status" value="1"/>
</dbReference>